<gene>
    <name type="primary">rpmG1</name>
    <name type="synonym">rpmG</name>
    <name type="synonym">rpmGA</name>
</gene>
<organism>
    <name type="scientific">Lactococcus lactis subsp. cremoris</name>
    <name type="common">Streptococcus cremoris</name>
    <dbReference type="NCBI Taxonomy" id="1359"/>
    <lineage>
        <taxon>Bacteria</taxon>
        <taxon>Bacillati</taxon>
        <taxon>Bacillota</taxon>
        <taxon>Bacilli</taxon>
        <taxon>Lactobacillales</taxon>
        <taxon>Streptococcaceae</taxon>
        <taxon>Lactococcus</taxon>
    </lineage>
</organism>
<name>RL331_LACLC</name>
<protein>
    <recommendedName>
        <fullName evidence="1">Large ribosomal subunit protein bL33A</fullName>
    </recommendedName>
    <alternativeName>
        <fullName>50S ribosomal protein L33 1</fullName>
    </alternativeName>
</protein>
<sequence>MRVKITLICSSCGNKNYISSKNKATHPEKVETMKFCPKERIVTLHREG</sequence>
<evidence type="ECO:0000255" key="1">
    <source>
        <dbReference type="HAMAP-Rule" id="MF_00294"/>
    </source>
</evidence>
<evidence type="ECO:0000305" key="2"/>
<reference key="1">
    <citation type="journal article" date="1992" name="Gene">
        <title>Sequence encoding ribosomal protein L33 of Lactococcus lactis.</title>
        <authorList>
            <person name="Koivula T."/>
            <person name="Hemilae H."/>
        </authorList>
    </citation>
    <scope>NUCLEOTIDE SEQUENCE [GENOMIC DNA]</scope>
    <source>
        <strain>MG1614</strain>
    </source>
</reference>
<feature type="chain" id="PRO_0000170173" description="Large ribosomal subunit protein bL33A">
    <location>
        <begin position="1"/>
        <end position="48"/>
    </location>
</feature>
<keyword id="KW-0687">Ribonucleoprotein</keyword>
<keyword id="KW-0689">Ribosomal protein</keyword>
<dbReference type="EMBL" id="X62621">
    <property type="protein sequence ID" value="CAA44489.1"/>
    <property type="molecule type" value="Genomic_DNA"/>
</dbReference>
<dbReference type="PIR" id="S18088">
    <property type="entry name" value="R6SO33"/>
</dbReference>
<dbReference type="RefSeq" id="WP_003129585.1">
    <property type="nucleotide sequence ID" value="NZ_WJUX01000028.1"/>
</dbReference>
<dbReference type="SMR" id="P0A488"/>
<dbReference type="GeneID" id="89632767"/>
<dbReference type="GO" id="GO:0005737">
    <property type="term" value="C:cytoplasm"/>
    <property type="evidence" value="ECO:0007669"/>
    <property type="project" value="UniProtKB-ARBA"/>
</dbReference>
<dbReference type="GO" id="GO:1990904">
    <property type="term" value="C:ribonucleoprotein complex"/>
    <property type="evidence" value="ECO:0007669"/>
    <property type="project" value="UniProtKB-KW"/>
</dbReference>
<dbReference type="GO" id="GO:0005840">
    <property type="term" value="C:ribosome"/>
    <property type="evidence" value="ECO:0007669"/>
    <property type="project" value="UniProtKB-KW"/>
</dbReference>
<dbReference type="GO" id="GO:0003735">
    <property type="term" value="F:structural constituent of ribosome"/>
    <property type="evidence" value="ECO:0007669"/>
    <property type="project" value="InterPro"/>
</dbReference>
<dbReference type="GO" id="GO:0006412">
    <property type="term" value="P:translation"/>
    <property type="evidence" value="ECO:0007669"/>
    <property type="project" value="UniProtKB-UniRule"/>
</dbReference>
<dbReference type="Gene3D" id="2.20.28.120">
    <property type="entry name" value="Ribosomal protein L33"/>
    <property type="match status" value="1"/>
</dbReference>
<dbReference type="HAMAP" id="MF_00294">
    <property type="entry name" value="Ribosomal_bL33"/>
    <property type="match status" value="1"/>
</dbReference>
<dbReference type="InterPro" id="IPR001705">
    <property type="entry name" value="Ribosomal_bL33"/>
</dbReference>
<dbReference type="InterPro" id="IPR018264">
    <property type="entry name" value="Ribosomal_bL33_CS"/>
</dbReference>
<dbReference type="InterPro" id="IPR038584">
    <property type="entry name" value="Ribosomal_bL33_sf"/>
</dbReference>
<dbReference type="InterPro" id="IPR011332">
    <property type="entry name" value="Ribosomal_zn-bd"/>
</dbReference>
<dbReference type="NCBIfam" id="NF001764">
    <property type="entry name" value="PRK00504.1"/>
    <property type="match status" value="1"/>
</dbReference>
<dbReference type="NCBIfam" id="NF001860">
    <property type="entry name" value="PRK00595.1"/>
    <property type="match status" value="1"/>
</dbReference>
<dbReference type="NCBIfam" id="TIGR01023">
    <property type="entry name" value="rpmG_bact"/>
    <property type="match status" value="1"/>
</dbReference>
<dbReference type="PANTHER" id="PTHR43168">
    <property type="entry name" value="50S RIBOSOMAL PROTEIN L33, CHLOROPLASTIC"/>
    <property type="match status" value="1"/>
</dbReference>
<dbReference type="PANTHER" id="PTHR43168:SF6">
    <property type="entry name" value="LARGE RIBOSOMAL SUBUNIT PROTEIN BL33A"/>
    <property type="match status" value="1"/>
</dbReference>
<dbReference type="Pfam" id="PF00471">
    <property type="entry name" value="Ribosomal_L33"/>
    <property type="match status" value="1"/>
</dbReference>
<dbReference type="SUPFAM" id="SSF57829">
    <property type="entry name" value="Zn-binding ribosomal proteins"/>
    <property type="match status" value="1"/>
</dbReference>
<dbReference type="PROSITE" id="PS00582">
    <property type="entry name" value="RIBOSOMAL_L33"/>
    <property type="match status" value="1"/>
</dbReference>
<accession>P0A488</accession>
<accession>P27167</accession>
<proteinExistence type="inferred from homology"/>
<comment type="similarity">
    <text evidence="2">Belongs to the bacterial ribosomal protein bL33 family.</text>
</comment>